<name>RDRP_CARMV</name>
<accession>P04518</accession>
<protein>
    <recommendedName>
        <fullName>RNA-directed RNA polymerase</fullName>
        <ecNumber>2.7.7.48</ecNumber>
    </recommendedName>
    <alternativeName>
        <fullName>Protein p88</fullName>
    </alternativeName>
    <component>
        <recommendedName>
            <fullName>Protein p28</fullName>
        </recommendedName>
    </component>
</protein>
<organism>
    <name type="scientific">Carnation mottle virus</name>
    <name type="common">CarMV</name>
    <dbReference type="NCBI Taxonomy" id="11986"/>
    <lineage>
        <taxon>Viruses</taxon>
        <taxon>Riboviria</taxon>
        <taxon>Orthornavirae</taxon>
        <taxon>Kitrinoviricota</taxon>
        <taxon>Tolucaviricetes</taxon>
        <taxon>Tolivirales</taxon>
        <taxon>Tombusviridae</taxon>
        <taxon>Procedovirinae</taxon>
        <taxon>Alphacarmovirus</taxon>
        <taxon>Alphacarmovirus dianthi</taxon>
    </lineage>
</organism>
<organismHost>
    <name type="scientific">Begonia</name>
    <dbReference type="NCBI Taxonomy" id="3681"/>
</organismHost>
<organismHost>
    <name type="scientific">Dianthus barbatus</name>
    <dbReference type="NCBI Taxonomy" id="278075"/>
</organismHost>
<organismHost>
    <name type="scientific">Dianthus caryophyllus</name>
    <name type="common">Carnation</name>
    <name type="synonym">Clove pink</name>
    <dbReference type="NCBI Taxonomy" id="3570"/>
</organismHost>
<organismHost>
    <name type="scientific">Dianthus chinensis</name>
    <dbReference type="NCBI Taxonomy" id="118431"/>
</organismHost>
<organismHost>
    <name type="scientific">Dianthus superbus</name>
    <dbReference type="NCBI Taxonomy" id="288950"/>
</organismHost>
<organismHost>
    <name type="scientific">Malus domestica</name>
    <name type="common">Apple</name>
    <name type="synonym">Pyrus malus</name>
    <dbReference type="NCBI Taxonomy" id="3750"/>
</organismHost>
<organismHost>
    <name type="scientific">Saponaria officinalis</name>
    <name type="common">Common soapwort</name>
    <name type="synonym">Lychnis saponaria</name>
    <dbReference type="NCBI Taxonomy" id="3572"/>
</organismHost>
<feature type="chain" id="PRO_0000222895" description="RNA-directed RNA polymerase">
    <location>
        <begin position="1"/>
        <end position="763"/>
    </location>
</feature>
<feature type="chain" id="PRO_0000398299" description="Protein p28">
    <location>
        <begin position="1"/>
        <end position="245"/>
    </location>
</feature>
<feature type="domain" description="RdRp catalytic" evidence="1">
    <location>
        <begin position="466"/>
        <end position="579"/>
    </location>
</feature>
<keyword id="KW-0547">Nucleotide-binding</keyword>
<keyword id="KW-0548">Nucleotidyltransferase</keyword>
<keyword id="KW-1159">RNA suppression of termination</keyword>
<keyword id="KW-0696">RNA-directed RNA polymerase</keyword>
<keyword id="KW-0808">Transferase</keyword>
<keyword id="KW-0693">Viral RNA replication</keyword>
<proteinExistence type="predicted"/>
<evidence type="ECO:0000255" key="1">
    <source>
        <dbReference type="PROSITE-ProRule" id="PRU00539"/>
    </source>
</evidence>
<evidence type="ECO:0000305" key="2"/>
<gene>
    <name type="ORF">ORF1</name>
</gene>
<sequence length="763" mass="85776">MGLPSLLVEGVIGCTLVGGLVAVGSAALAVRATIGVVEFNRECVRGARRIVSSGGRCLVVQSPYGNPNQGLIRGEDEEIDNVEESTPVELTPLIEVKAEVDGKEVVVSKKRVVNRHLRQRFVRSIAIEAKNHFGGDISPSKANYLSVSKFLTGKCKERHVVPAHTRDCVSAAMVLVFTPDVHEIRMMAGLASDAAYGIKIAMASILNRKGWCWRLMVNPLDRARWWEMWCVVNGFDSNKPVTFPKXGGLFYLNGVETKIRRGGHPSVIEVDGQCPLKERKLYVQNAITTGYEYRVHNHSYANLRRGLLERVFYVERNKELVSCPQPEPGSFKEMGYLRRRFHRVCGNHTRISANDLVDCYQGRKRTIYENAAASLLDRAIERKDGDLKTFIKAEKFNVNLKSDPAPRVIQPRSPRYNVELGRYLKKYEHHAYKALDKIWGGPTVMKGYTTEEVAQHIWSAWNQFQTPVAIGFDMSRFDQHVSVAALEFEHSCYLACFEGDAHLANLLKMQLVNHGVGFASNGMLRYTKEGCRMSGDMNTALGNCLLACLITKHLMKIRSRLINNGDDCVLICERTDIDYVVSNLTTGWSRFGFNCIAEEPVYEMEKIRFCQMAPVFDGAGWLMVRDPLVSMSKDSHSLVHWNNETNAKQWLKSVGMCGLRIAGGVPVVQEFYQKYVETAGNVRENKNITEKSSSGFFMMADRAKRGYSAVSEVCRFSFYQAFGITPDQQIALEGEIRSLTINTNVGPQCEAADSLWILNRKYQ</sequence>
<reference key="1">
    <citation type="journal article" date="1985" name="Nucleic Acids Res.">
        <title>Nucleotide sequence and genome organization of carnation mottle virus RNA.</title>
        <authorList>
            <person name="Guilley H."/>
            <person name="Carrington J.C."/>
            <person name="Balazs E."/>
            <person name="Jonard G."/>
            <person name="Richards K."/>
            <person name="Morris T.J."/>
        </authorList>
    </citation>
    <scope>NUCLEOTIDE SEQUENCE [GENOMIC RNA]</scope>
</reference>
<comment type="function">
    <text evidence="2">RNA-dependent RNA polymerase that plays an essential role in the virus replication.</text>
</comment>
<comment type="catalytic activity">
    <reaction evidence="1">
        <text>RNA(n) + a ribonucleoside 5'-triphosphate = RNA(n+1) + diphosphate</text>
        <dbReference type="Rhea" id="RHEA:21248"/>
        <dbReference type="Rhea" id="RHEA-COMP:14527"/>
        <dbReference type="Rhea" id="RHEA-COMP:17342"/>
        <dbReference type="ChEBI" id="CHEBI:33019"/>
        <dbReference type="ChEBI" id="CHEBI:61557"/>
        <dbReference type="ChEBI" id="CHEBI:140395"/>
        <dbReference type="EC" id="2.7.7.48"/>
    </reaction>
</comment>
<comment type="miscellaneous">
    <text>Readthrough of the terminator UAG occurs at position 246.</text>
</comment>
<comment type="sequence caution" evidence="2">
    <conflict type="erroneous gene model prediction">
        <sequence resource="EMBL-CDS" id="CAA26726"/>
    </conflict>
</comment>
<dbReference type="EC" id="2.7.7.48"/>
<dbReference type="EMBL" id="X02986">
    <property type="protein sequence ID" value="CAA26726.1"/>
    <property type="status" value="ALT_SEQ"/>
    <property type="molecule type" value="Genomic_RNA"/>
</dbReference>
<dbReference type="PIR" id="A04208">
    <property type="entry name" value="RRVECV"/>
</dbReference>
<dbReference type="RefSeq" id="YP_009032645.1">
    <property type="nucleotide sequence ID" value="NC_001265.2"/>
</dbReference>
<dbReference type="RefSeq" id="YP_009032646.1">
    <property type="nucleotide sequence ID" value="NC_001265.2"/>
</dbReference>
<dbReference type="KEGG" id="vg:1724754"/>
<dbReference type="KEGG" id="vg:1724755"/>
<dbReference type="OrthoDB" id="12338at10239"/>
<dbReference type="Proteomes" id="UP000201784">
    <property type="component" value="Genome"/>
</dbReference>
<dbReference type="GO" id="GO:0000166">
    <property type="term" value="F:nucleotide binding"/>
    <property type="evidence" value="ECO:0007669"/>
    <property type="project" value="UniProtKB-KW"/>
</dbReference>
<dbReference type="GO" id="GO:0003723">
    <property type="term" value="F:RNA binding"/>
    <property type="evidence" value="ECO:0007669"/>
    <property type="project" value="InterPro"/>
</dbReference>
<dbReference type="GO" id="GO:0003968">
    <property type="term" value="F:RNA-directed RNA polymerase activity"/>
    <property type="evidence" value="ECO:0007669"/>
    <property type="project" value="UniProtKB-KW"/>
</dbReference>
<dbReference type="GO" id="GO:0039694">
    <property type="term" value="P:viral RNA genome replication"/>
    <property type="evidence" value="ECO:0007669"/>
    <property type="project" value="InterPro"/>
</dbReference>
<dbReference type="CDD" id="cd23239">
    <property type="entry name" value="Alphacarmovirus_RdRp"/>
    <property type="match status" value="1"/>
</dbReference>
<dbReference type="Gene3D" id="3.30.70.270">
    <property type="match status" value="1"/>
</dbReference>
<dbReference type="InterPro" id="IPR043502">
    <property type="entry name" value="DNA/RNA_pol_sf"/>
</dbReference>
<dbReference type="InterPro" id="IPR043128">
    <property type="entry name" value="Rev_trsase/Diguanyl_cyclase"/>
</dbReference>
<dbReference type="InterPro" id="IPR007094">
    <property type="entry name" value="RNA-dir_pol_PSvirus"/>
</dbReference>
<dbReference type="InterPro" id="IPR002166">
    <property type="entry name" value="RNA_pol_HCV"/>
</dbReference>
<dbReference type="Pfam" id="PF00998">
    <property type="entry name" value="RdRP_3"/>
    <property type="match status" value="1"/>
</dbReference>
<dbReference type="SUPFAM" id="SSF56672">
    <property type="entry name" value="DNA/RNA polymerases"/>
    <property type="match status" value="1"/>
</dbReference>
<dbReference type="PROSITE" id="PS50507">
    <property type="entry name" value="RDRP_SSRNA_POS"/>
    <property type="match status" value="1"/>
</dbReference>